<organism>
    <name type="scientific">Staphylococcus aureus (strain Newman)</name>
    <dbReference type="NCBI Taxonomy" id="426430"/>
    <lineage>
        <taxon>Bacteria</taxon>
        <taxon>Bacillati</taxon>
        <taxon>Bacillota</taxon>
        <taxon>Bacilli</taxon>
        <taxon>Bacillales</taxon>
        <taxon>Staphylococcaceae</taxon>
        <taxon>Staphylococcus</taxon>
    </lineage>
</organism>
<feature type="chain" id="PRO_1000072092" description="Large ribosomal subunit protein uL10">
    <location>
        <begin position="1"/>
        <end position="166"/>
    </location>
</feature>
<proteinExistence type="inferred from homology"/>
<evidence type="ECO:0000255" key="1">
    <source>
        <dbReference type="HAMAP-Rule" id="MF_00362"/>
    </source>
</evidence>
<evidence type="ECO:0000305" key="2"/>
<protein>
    <recommendedName>
        <fullName evidence="1">Large ribosomal subunit protein uL10</fullName>
    </recommendedName>
    <alternativeName>
        <fullName evidence="2">50S ribosomal protein L10</fullName>
    </alternativeName>
</protein>
<keyword id="KW-0687">Ribonucleoprotein</keyword>
<keyword id="KW-0689">Ribosomal protein</keyword>
<keyword id="KW-0694">RNA-binding</keyword>
<keyword id="KW-0699">rRNA-binding</keyword>
<reference key="1">
    <citation type="journal article" date="2008" name="J. Bacteriol.">
        <title>Genome sequence of Staphylococcus aureus strain Newman and comparative analysis of staphylococcal genomes: polymorphism and evolution of two major pathogenicity islands.</title>
        <authorList>
            <person name="Baba T."/>
            <person name="Bae T."/>
            <person name="Schneewind O."/>
            <person name="Takeuchi F."/>
            <person name="Hiramatsu K."/>
        </authorList>
    </citation>
    <scope>NUCLEOTIDE SEQUENCE [LARGE SCALE GENOMIC DNA]</scope>
    <source>
        <strain>Newman</strain>
    </source>
</reference>
<sequence length="166" mass="17710">MSAIIEAKKQLVDEIAEVLSNSVSTVIVDYRGLTVAEVTDLRSQLREAGVEYKVYKNTMVRRAAEKAGIEGLDEFLTGPTAIATSSEDAVAAAKVISGFAKDHEALEIKSGVMEGNVITAEEVKTVGSLPSHDGLVSMLLSVLQAPVRNFAYAVKAIGEQKEENAE</sequence>
<accession>A6QEJ1</accession>
<gene>
    <name evidence="1" type="primary">rplJ</name>
    <name type="ordered locus">NWMN_0501</name>
</gene>
<name>RL10_STAAE</name>
<dbReference type="EMBL" id="AP009351">
    <property type="protein sequence ID" value="BAF66773.1"/>
    <property type="molecule type" value="Genomic_DNA"/>
</dbReference>
<dbReference type="RefSeq" id="WP_001273085.1">
    <property type="nucleotide sequence ID" value="NZ_JBBIAE010000002.1"/>
</dbReference>
<dbReference type="SMR" id="A6QEJ1"/>
<dbReference type="KEGG" id="sae:NWMN_0501"/>
<dbReference type="HOGENOM" id="CLU_092227_2_0_9"/>
<dbReference type="Proteomes" id="UP000006386">
    <property type="component" value="Chromosome"/>
</dbReference>
<dbReference type="GO" id="GO:0015934">
    <property type="term" value="C:large ribosomal subunit"/>
    <property type="evidence" value="ECO:0007669"/>
    <property type="project" value="InterPro"/>
</dbReference>
<dbReference type="GO" id="GO:0070180">
    <property type="term" value="F:large ribosomal subunit rRNA binding"/>
    <property type="evidence" value="ECO:0007669"/>
    <property type="project" value="UniProtKB-UniRule"/>
</dbReference>
<dbReference type="GO" id="GO:0003735">
    <property type="term" value="F:structural constituent of ribosome"/>
    <property type="evidence" value="ECO:0007669"/>
    <property type="project" value="InterPro"/>
</dbReference>
<dbReference type="GO" id="GO:0006412">
    <property type="term" value="P:translation"/>
    <property type="evidence" value="ECO:0007669"/>
    <property type="project" value="UniProtKB-UniRule"/>
</dbReference>
<dbReference type="CDD" id="cd05797">
    <property type="entry name" value="Ribosomal_L10"/>
    <property type="match status" value="1"/>
</dbReference>
<dbReference type="FunFam" id="3.30.70.1730:FF:000001">
    <property type="entry name" value="50S ribosomal protein L10"/>
    <property type="match status" value="1"/>
</dbReference>
<dbReference type="Gene3D" id="3.30.70.1730">
    <property type="match status" value="1"/>
</dbReference>
<dbReference type="Gene3D" id="6.10.250.290">
    <property type="match status" value="1"/>
</dbReference>
<dbReference type="HAMAP" id="MF_00362">
    <property type="entry name" value="Ribosomal_uL10"/>
    <property type="match status" value="1"/>
</dbReference>
<dbReference type="InterPro" id="IPR001790">
    <property type="entry name" value="Ribosomal_uL10"/>
</dbReference>
<dbReference type="InterPro" id="IPR043141">
    <property type="entry name" value="Ribosomal_uL10-like_sf"/>
</dbReference>
<dbReference type="InterPro" id="IPR022973">
    <property type="entry name" value="Ribosomal_uL10_bac"/>
</dbReference>
<dbReference type="InterPro" id="IPR047865">
    <property type="entry name" value="Ribosomal_uL10_bac_type"/>
</dbReference>
<dbReference type="InterPro" id="IPR002363">
    <property type="entry name" value="Ribosomal_uL10_CS_bac"/>
</dbReference>
<dbReference type="NCBIfam" id="NF000955">
    <property type="entry name" value="PRK00099.1-1"/>
    <property type="match status" value="1"/>
</dbReference>
<dbReference type="PANTHER" id="PTHR11560">
    <property type="entry name" value="39S RIBOSOMAL PROTEIN L10, MITOCHONDRIAL"/>
    <property type="match status" value="1"/>
</dbReference>
<dbReference type="Pfam" id="PF00466">
    <property type="entry name" value="Ribosomal_L10"/>
    <property type="match status" value="1"/>
</dbReference>
<dbReference type="SUPFAM" id="SSF160369">
    <property type="entry name" value="Ribosomal protein L10-like"/>
    <property type="match status" value="1"/>
</dbReference>
<dbReference type="PROSITE" id="PS01109">
    <property type="entry name" value="RIBOSOMAL_L10"/>
    <property type="match status" value="1"/>
</dbReference>
<comment type="function">
    <text evidence="1">Forms part of the ribosomal stalk, playing a central role in the interaction of the ribosome with GTP-bound translation factors.</text>
</comment>
<comment type="subunit">
    <text evidence="1">Part of the ribosomal stalk of the 50S ribosomal subunit. The N-terminus interacts with L11 and the large rRNA to form the base of the stalk. The C-terminus forms an elongated spine to which L12 dimers bind in a sequential fashion forming a multimeric L10(L12)X complex.</text>
</comment>
<comment type="similarity">
    <text evidence="1">Belongs to the universal ribosomal protein uL10 family.</text>
</comment>